<accession>P34779</accession>
<keyword id="KW-0934">Plastid</keyword>
<protein>
    <recommendedName>
        <fullName>Uncharacterized 8.7 kDa protein in rpl22-rpl23 intergenic region</fullName>
    </recommendedName>
    <alternativeName>
        <fullName>ORF70</fullName>
    </alternativeName>
</protein>
<reference key="1">
    <citation type="journal article" date="1994" name="Curr. Genet.">
        <title>Genes for components of the chloroplast translational apparatus are conserved in the reduced 73-kb plastid DNA of the nonphotosynthetic euglenoid flagellate Astasia longa.</title>
        <authorList>
            <person name="Gockel G."/>
            <person name="Hachtel W."/>
            <person name="Baier S."/>
            <person name="Fliss C."/>
            <person name="Henke M."/>
        </authorList>
    </citation>
    <scope>NUCLEOTIDE SEQUENCE [GENOMIC DNA]</scope>
    <source>
        <strain>CCAP 1204-17a</strain>
    </source>
</reference>
<reference key="2">
    <citation type="journal article" date="2000" name="Protist">
        <title>Complete gene map of the plastid genome of the nonphotosynthetic euglenoid flagellate Astasia longa.</title>
        <authorList>
            <person name="Gockel G."/>
            <person name="Hachtel W."/>
        </authorList>
    </citation>
    <scope>NUCLEOTIDE SEQUENCE [LARGE SCALE GENOMIC DNA]</scope>
    <source>
        <strain>CCAP 1204-17a</strain>
    </source>
</reference>
<name>YCX5_EUGLO</name>
<sequence length="70" mass="8718">MIMLIINYIYVINNCIYYKFLLSYLYLYCTVSNWKKYLIFFIKLEDIKVIYLILYKLGYNIINELFFRGK</sequence>
<proteinExistence type="predicted"/>
<dbReference type="EMBL" id="AJ294725">
    <property type="protein sequence ID" value="CAC24592.1"/>
    <property type="molecule type" value="Genomic_DNA"/>
</dbReference>
<dbReference type="PIR" id="S38603">
    <property type="entry name" value="S38603"/>
</dbReference>
<dbReference type="RefSeq" id="NP_074981.1">
    <property type="nucleotide sequence ID" value="NC_002652.1"/>
</dbReference>
<dbReference type="GeneID" id="1457311"/>
<dbReference type="GO" id="GO:0009536">
    <property type="term" value="C:plastid"/>
    <property type="evidence" value="ECO:0007669"/>
    <property type="project" value="UniProtKB-SubCell"/>
</dbReference>
<feature type="chain" id="PRO_0000217488" description="Uncharacterized 8.7 kDa protein in rpl22-rpl23 intergenic region">
    <location>
        <begin position="1"/>
        <end position="70"/>
    </location>
</feature>
<geneLocation type="non-photosynthetic plastid"/>
<comment type="subcellular location">
    <subcellularLocation>
        <location>Plastid</location>
    </subcellularLocation>
</comment>
<organism>
    <name type="scientific">Euglena longa</name>
    <name type="common">Euglenophycean alga</name>
    <name type="synonym">Astasia longa</name>
    <dbReference type="NCBI Taxonomy" id="3037"/>
    <lineage>
        <taxon>Eukaryota</taxon>
        <taxon>Discoba</taxon>
        <taxon>Euglenozoa</taxon>
        <taxon>Euglenida</taxon>
        <taxon>Spirocuta</taxon>
        <taxon>Euglenophyceae</taxon>
        <taxon>Euglenales</taxon>
        <taxon>Euglenaceae</taxon>
        <taxon>Euglena</taxon>
    </lineage>
</organism>